<comment type="function">
    <text evidence="1">Binds 23S rRNA and is also seen to make contacts with the A and possibly P site tRNAs.</text>
</comment>
<comment type="subunit">
    <text evidence="1">Part of the 50S ribosomal subunit.</text>
</comment>
<comment type="similarity">
    <text evidence="1">Belongs to the universal ribosomal protein uL16 family.</text>
</comment>
<gene>
    <name evidence="1" type="primary">rplP</name>
    <name type="ordered locus">LL2092</name>
    <name type="ORF">L0412</name>
</gene>
<feature type="chain" id="PRO_0000062121" description="Large ribosomal subunit protein uL16">
    <location>
        <begin position="1"/>
        <end position="137"/>
    </location>
</feature>
<proteinExistence type="inferred from homology"/>
<accession>Q9CDW9</accession>
<name>RL16_LACLA</name>
<dbReference type="EMBL" id="AE005176">
    <property type="protein sequence ID" value="AAK06190.1"/>
    <property type="molecule type" value="Genomic_DNA"/>
</dbReference>
<dbReference type="PIR" id="D86886">
    <property type="entry name" value="D86886"/>
</dbReference>
<dbReference type="RefSeq" id="NP_268249.1">
    <property type="nucleotide sequence ID" value="NC_002662.1"/>
</dbReference>
<dbReference type="RefSeq" id="WP_003129958.1">
    <property type="nucleotide sequence ID" value="NC_002662.1"/>
</dbReference>
<dbReference type="SMR" id="Q9CDW9"/>
<dbReference type="PaxDb" id="272623-L0412"/>
<dbReference type="EnsemblBacteria" id="AAK06190">
    <property type="protein sequence ID" value="AAK06190"/>
    <property type="gene ID" value="L0412"/>
</dbReference>
<dbReference type="GeneID" id="89634439"/>
<dbReference type="KEGG" id="lla:L0412"/>
<dbReference type="PATRIC" id="fig|272623.7.peg.2251"/>
<dbReference type="eggNOG" id="COG0197">
    <property type="taxonomic scope" value="Bacteria"/>
</dbReference>
<dbReference type="HOGENOM" id="CLU_078858_2_1_9"/>
<dbReference type="OrthoDB" id="9802589at2"/>
<dbReference type="Proteomes" id="UP000002196">
    <property type="component" value="Chromosome"/>
</dbReference>
<dbReference type="GO" id="GO:0022625">
    <property type="term" value="C:cytosolic large ribosomal subunit"/>
    <property type="evidence" value="ECO:0007669"/>
    <property type="project" value="TreeGrafter"/>
</dbReference>
<dbReference type="GO" id="GO:0019843">
    <property type="term" value="F:rRNA binding"/>
    <property type="evidence" value="ECO:0007669"/>
    <property type="project" value="UniProtKB-UniRule"/>
</dbReference>
<dbReference type="GO" id="GO:0003735">
    <property type="term" value="F:structural constituent of ribosome"/>
    <property type="evidence" value="ECO:0007669"/>
    <property type="project" value="InterPro"/>
</dbReference>
<dbReference type="GO" id="GO:0000049">
    <property type="term" value="F:tRNA binding"/>
    <property type="evidence" value="ECO:0007669"/>
    <property type="project" value="UniProtKB-KW"/>
</dbReference>
<dbReference type="GO" id="GO:0006412">
    <property type="term" value="P:translation"/>
    <property type="evidence" value="ECO:0007669"/>
    <property type="project" value="UniProtKB-UniRule"/>
</dbReference>
<dbReference type="CDD" id="cd01433">
    <property type="entry name" value="Ribosomal_L16_L10e"/>
    <property type="match status" value="1"/>
</dbReference>
<dbReference type="FunFam" id="3.90.1170.10:FF:000001">
    <property type="entry name" value="50S ribosomal protein L16"/>
    <property type="match status" value="1"/>
</dbReference>
<dbReference type="Gene3D" id="3.90.1170.10">
    <property type="entry name" value="Ribosomal protein L10e/L16"/>
    <property type="match status" value="1"/>
</dbReference>
<dbReference type="HAMAP" id="MF_01342">
    <property type="entry name" value="Ribosomal_uL16"/>
    <property type="match status" value="1"/>
</dbReference>
<dbReference type="InterPro" id="IPR047873">
    <property type="entry name" value="Ribosomal_uL16"/>
</dbReference>
<dbReference type="InterPro" id="IPR000114">
    <property type="entry name" value="Ribosomal_uL16_bact-type"/>
</dbReference>
<dbReference type="InterPro" id="IPR020798">
    <property type="entry name" value="Ribosomal_uL16_CS"/>
</dbReference>
<dbReference type="InterPro" id="IPR016180">
    <property type="entry name" value="Ribosomal_uL16_dom"/>
</dbReference>
<dbReference type="InterPro" id="IPR036920">
    <property type="entry name" value="Ribosomal_uL16_sf"/>
</dbReference>
<dbReference type="NCBIfam" id="TIGR01164">
    <property type="entry name" value="rplP_bact"/>
    <property type="match status" value="1"/>
</dbReference>
<dbReference type="PANTHER" id="PTHR12220">
    <property type="entry name" value="50S/60S RIBOSOMAL PROTEIN L16"/>
    <property type="match status" value="1"/>
</dbReference>
<dbReference type="PANTHER" id="PTHR12220:SF13">
    <property type="entry name" value="LARGE RIBOSOMAL SUBUNIT PROTEIN UL16M"/>
    <property type="match status" value="1"/>
</dbReference>
<dbReference type="Pfam" id="PF00252">
    <property type="entry name" value="Ribosomal_L16"/>
    <property type="match status" value="1"/>
</dbReference>
<dbReference type="PRINTS" id="PR00060">
    <property type="entry name" value="RIBOSOMALL16"/>
</dbReference>
<dbReference type="SUPFAM" id="SSF54686">
    <property type="entry name" value="Ribosomal protein L16p/L10e"/>
    <property type="match status" value="1"/>
</dbReference>
<dbReference type="PROSITE" id="PS00586">
    <property type="entry name" value="RIBOSOMAL_L16_1"/>
    <property type="match status" value="1"/>
</dbReference>
<dbReference type="PROSITE" id="PS00701">
    <property type="entry name" value="RIBOSOMAL_L16_2"/>
    <property type="match status" value="1"/>
</dbReference>
<protein>
    <recommendedName>
        <fullName evidence="1">Large ribosomal subunit protein uL16</fullName>
    </recommendedName>
    <alternativeName>
        <fullName evidence="2">50S ribosomal protein L16</fullName>
    </alternativeName>
</protein>
<organism>
    <name type="scientific">Lactococcus lactis subsp. lactis (strain IL1403)</name>
    <name type="common">Streptococcus lactis</name>
    <dbReference type="NCBI Taxonomy" id="272623"/>
    <lineage>
        <taxon>Bacteria</taxon>
        <taxon>Bacillati</taxon>
        <taxon>Bacillota</taxon>
        <taxon>Bacilli</taxon>
        <taxon>Lactobacillales</taxon>
        <taxon>Streptococcaceae</taxon>
        <taxon>Lactococcus</taxon>
    </lineage>
</organism>
<sequence>MLVPKRVKHRREFRGKMRGYAKGGDTISFGEYGLQATTSHWITNRQIEAARIAMTRYMKRNGQVWIKIFPHKSYTAKAIGVRMGSGKGAPEGWVAPVKRGVVMFELGGVDEATAREALRLASHKLPVKTKFVKRGEA</sequence>
<evidence type="ECO:0000255" key="1">
    <source>
        <dbReference type="HAMAP-Rule" id="MF_01342"/>
    </source>
</evidence>
<evidence type="ECO:0000305" key="2"/>
<reference key="1">
    <citation type="journal article" date="2001" name="Genome Res.">
        <title>The complete genome sequence of the lactic acid bacterium Lactococcus lactis ssp. lactis IL1403.</title>
        <authorList>
            <person name="Bolotin A."/>
            <person name="Wincker P."/>
            <person name="Mauger S."/>
            <person name="Jaillon O."/>
            <person name="Malarme K."/>
            <person name="Weissenbach J."/>
            <person name="Ehrlich S.D."/>
            <person name="Sorokin A."/>
        </authorList>
    </citation>
    <scope>NUCLEOTIDE SEQUENCE [LARGE SCALE GENOMIC DNA]</scope>
    <source>
        <strain>IL1403</strain>
    </source>
</reference>
<keyword id="KW-1185">Reference proteome</keyword>
<keyword id="KW-0687">Ribonucleoprotein</keyword>
<keyword id="KW-0689">Ribosomal protein</keyword>
<keyword id="KW-0694">RNA-binding</keyword>
<keyword id="KW-0699">rRNA-binding</keyword>
<keyword id="KW-0820">tRNA-binding</keyword>